<feature type="chain" id="PRO_0000106843" description="Uncharacterized protein MJ0380">
    <location>
        <begin position="1"/>
        <end position="118"/>
    </location>
</feature>
<dbReference type="EMBL" id="L77117">
    <property type="protein sequence ID" value="AAB98377.1"/>
    <property type="molecule type" value="Genomic_DNA"/>
</dbReference>
<dbReference type="PIR" id="D64347">
    <property type="entry name" value="D64347"/>
</dbReference>
<dbReference type="SMR" id="Q57825"/>
<dbReference type="STRING" id="243232.MJ_0380"/>
<dbReference type="PaxDb" id="243232-MJ_0380"/>
<dbReference type="EnsemblBacteria" id="AAB98377">
    <property type="protein sequence ID" value="AAB98377"/>
    <property type="gene ID" value="MJ_0380"/>
</dbReference>
<dbReference type="KEGG" id="mja:MJ_0380"/>
<dbReference type="eggNOG" id="arCOG06572">
    <property type="taxonomic scope" value="Archaea"/>
</dbReference>
<dbReference type="HOGENOM" id="CLU_1891544_0_0_2"/>
<dbReference type="InParanoid" id="Q57825"/>
<dbReference type="OrthoDB" id="101020at2157"/>
<dbReference type="Proteomes" id="UP000000805">
    <property type="component" value="Chromosome"/>
</dbReference>
<name>Y380_METJA</name>
<keyword id="KW-1185">Reference proteome</keyword>
<gene>
    <name type="ordered locus">MJ0380</name>
</gene>
<reference key="1">
    <citation type="journal article" date="1996" name="Science">
        <title>Complete genome sequence of the methanogenic archaeon, Methanococcus jannaschii.</title>
        <authorList>
            <person name="Bult C.J."/>
            <person name="White O."/>
            <person name="Olsen G.J."/>
            <person name="Zhou L."/>
            <person name="Fleischmann R.D."/>
            <person name="Sutton G.G."/>
            <person name="Blake J.A."/>
            <person name="FitzGerald L.M."/>
            <person name="Clayton R.A."/>
            <person name="Gocayne J.D."/>
            <person name="Kerlavage A.R."/>
            <person name="Dougherty B.A."/>
            <person name="Tomb J.-F."/>
            <person name="Adams M.D."/>
            <person name="Reich C.I."/>
            <person name="Overbeek R."/>
            <person name="Kirkness E.F."/>
            <person name="Weinstock K.G."/>
            <person name="Merrick J.M."/>
            <person name="Glodek A."/>
            <person name="Scott J.L."/>
            <person name="Geoghagen N.S.M."/>
            <person name="Weidman J.F."/>
            <person name="Fuhrmann J.L."/>
            <person name="Nguyen D."/>
            <person name="Utterback T.R."/>
            <person name="Kelley J.M."/>
            <person name="Peterson J.D."/>
            <person name="Sadow P.W."/>
            <person name="Hanna M.C."/>
            <person name="Cotton M.D."/>
            <person name="Roberts K.M."/>
            <person name="Hurst M.A."/>
            <person name="Kaine B.P."/>
            <person name="Borodovsky M."/>
            <person name="Klenk H.-P."/>
            <person name="Fraser C.M."/>
            <person name="Smith H.O."/>
            <person name="Woese C.R."/>
            <person name="Venter J.C."/>
        </authorList>
    </citation>
    <scope>NUCLEOTIDE SEQUENCE [LARGE SCALE GENOMIC DNA]</scope>
    <source>
        <strain>ATCC 43067 / DSM 2661 / JAL-1 / JCM 10045 / NBRC 100440</strain>
    </source>
</reference>
<protein>
    <recommendedName>
        <fullName>Uncharacterized protein MJ0380</fullName>
    </recommendedName>
</protein>
<accession>Q57825</accession>
<sequence length="118" mass="13758">MSIDEVIKLENWMKNIGRYLSYLISDKFEEYAYDIIDGVAKARNANELLEALYKGLRLSPKLKKKGNIEVPSPEDVKKLEETLREIGDNEKEVRKIGLSMALWAFADWEKDHRKRGDQ</sequence>
<organism>
    <name type="scientific">Methanocaldococcus jannaschii (strain ATCC 43067 / DSM 2661 / JAL-1 / JCM 10045 / NBRC 100440)</name>
    <name type="common">Methanococcus jannaschii</name>
    <dbReference type="NCBI Taxonomy" id="243232"/>
    <lineage>
        <taxon>Archaea</taxon>
        <taxon>Methanobacteriati</taxon>
        <taxon>Methanobacteriota</taxon>
        <taxon>Methanomada group</taxon>
        <taxon>Methanococci</taxon>
        <taxon>Methanococcales</taxon>
        <taxon>Methanocaldococcaceae</taxon>
        <taxon>Methanocaldococcus</taxon>
    </lineage>
</organism>
<proteinExistence type="predicted"/>